<accession>B2V704</accession>
<sequence length="388" mass="43452">MKKIFLSVGEISGDNYASELAKHLKEYQITGITGPKMRAIGVKPVANLEDISVVGLTEALSKYKKIKEVFKQSVQALKSGVDLLIVVDFPGFNIKLLKEAKKLGIKTVYFISPQVWAWGSGRVKEIVENTDLLISILPFEEEIYKPYVSDKFKFAYVGHPLLDIIKIYENEDSFKQKLNIPKNKRIIGLLAGSRESEVNVILPILIEAARLLTKTFDDLHFVIPATVNMVDRVLEKVNFSLPITVITSNLSDKNLPKFENPSYEVMKNAVFSIITSGTATLEAAIIGNPFIIVYKVSPITYFIGKKLVKINYLGLPNIIAGNEIVPELLQDRCNPLDIANKTLEFLTDKNLYKTQKRNLEIVRKSLGKKGAIERASNLIRTLLEKGQA</sequence>
<organism>
    <name type="scientific">Sulfurihydrogenibium sp. (strain YO3AOP1)</name>
    <dbReference type="NCBI Taxonomy" id="436114"/>
    <lineage>
        <taxon>Bacteria</taxon>
        <taxon>Pseudomonadati</taxon>
        <taxon>Aquificota</taxon>
        <taxon>Aquificia</taxon>
        <taxon>Aquificales</taxon>
        <taxon>Hydrogenothermaceae</taxon>
        <taxon>Sulfurihydrogenibium</taxon>
    </lineage>
</organism>
<name>LPXB_SULSY</name>
<proteinExistence type="inferred from homology"/>
<keyword id="KW-0328">Glycosyltransferase</keyword>
<keyword id="KW-0441">Lipid A biosynthesis</keyword>
<keyword id="KW-0444">Lipid biosynthesis</keyword>
<keyword id="KW-0443">Lipid metabolism</keyword>
<keyword id="KW-0808">Transferase</keyword>
<comment type="function">
    <text evidence="1">Condensation of UDP-2,3-diacylglucosamine and 2,3-diacylglucosamine-1-phosphate to form lipid A disaccharide, a precursor of lipid A, a phosphorylated glycolipid that anchors the lipopolysaccharide to the outer membrane of the cell.</text>
</comment>
<comment type="catalytic activity">
    <reaction evidence="1">
        <text>a lipid X + a UDP-2-N,3-O-bis[(3R)-3-hydroxyacyl]-alpha-D-glucosamine = a lipid A disaccharide + UDP + H(+)</text>
        <dbReference type="Rhea" id="RHEA:67828"/>
        <dbReference type="ChEBI" id="CHEBI:15378"/>
        <dbReference type="ChEBI" id="CHEBI:58223"/>
        <dbReference type="ChEBI" id="CHEBI:137748"/>
        <dbReference type="ChEBI" id="CHEBI:176338"/>
        <dbReference type="ChEBI" id="CHEBI:176343"/>
        <dbReference type="EC" id="2.4.1.182"/>
    </reaction>
</comment>
<comment type="pathway">
    <text evidence="1">Bacterial outer membrane biogenesis; LPS lipid A biosynthesis.</text>
</comment>
<comment type="similarity">
    <text evidence="1">Belongs to the LpxB family.</text>
</comment>
<gene>
    <name evidence="1" type="primary">lpxB</name>
    <name type="ordered locus">SYO3AOP1_0140</name>
</gene>
<dbReference type="EC" id="2.4.1.182" evidence="1"/>
<dbReference type="EMBL" id="CP001080">
    <property type="protein sequence ID" value="ACD65786.1"/>
    <property type="molecule type" value="Genomic_DNA"/>
</dbReference>
<dbReference type="RefSeq" id="WP_012458876.1">
    <property type="nucleotide sequence ID" value="NC_010730.1"/>
</dbReference>
<dbReference type="SMR" id="B2V704"/>
<dbReference type="STRING" id="436114.SYO3AOP1_0140"/>
<dbReference type="CAZy" id="GT19">
    <property type="family name" value="Glycosyltransferase Family 19"/>
</dbReference>
<dbReference type="KEGG" id="sul:SYO3AOP1_0140"/>
<dbReference type="eggNOG" id="COG0763">
    <property type="taxonomic scope" value="Bacteria"/>
</dbReference>
<dbReference type="HOGENOM" id="CLU_036577_3_1_0"/>
<dbReference type="UniPathway" id="UPA00973"/>
<dbReference type="GO" id="GO:0016020">
    <property type="term" value="C:membrane"/>
    <property type="evidence" value="ECO:0007669"/>
    <property type="project" value="GOC"/>
</dbReference>
<dbReference type="GO" id="GO:0008915">
    <property type="term" value="F:lipid-A-disaccharide synthase activity"/>
    <property type="evidence" value="ECO:0007669"/>
    <property type="project" value="UniProtKB-UniRule"/>
</dbReference>
<dbReference type="GO" id="GO:0005543">
    <property type="term" value="F:phospholipid binding"/>
    <property type="evidence" value="ECO:0007669"/>
    <property type="project" value="TreeGrafter"/>
</dbReference>
<dbReference type="GO" id="GO:0009245">
    <property type="term" value="P:lipid A biosynthetic process"/>
    <property type="evidence" value="ECO:0007669"/>
    <property type="project" value="UniProtKB-UniRule"/>
</dbReference>
<dbReference type="HAMAP" id="MF_00392">
    <property type="entry name" value="LpxB"/>
    <property type="match status" value="1"/>
</dbReference>
<dbReference type="InterPro" id="IPR003835">
    <property type="entry name" value="Glyco_trans_19"/>
</dbReference>
<dbReference type="NCBIfam" id="TIGR00215">
    <property type="entry name" value="lpxB"/>
    <property type="match status" value="1"/>
</dbReference>
<dbReference type="PANTHER" id="PTHR30372">
    <property type="entry name" value="LIPID-A-DISACCHARIDE SYNTHASE"/>
    <property type="match status" value="1"/>
</dbReference>
<dbReference type="PANTHER" id="PTHR30372:SF4">
    <property type="entry name" value="LIPID-A-DISACCHARIDE SYNTHASE, MITOCHONDRIAL-RELATED"/>
    <property type="match status" value="1"/>
</dbReference>
<dbReference type="Pfam" id="PF02684">
    <property type="entry name" value="LpxB"/>
    <property type="match status" value="1"/>
</dbReference>
<dbReference type="SUPFAM" id="SSF53756">
    <property type="entry name" value="UDP-Glycosyltransferase/glycogen phosphorylase"/>
    <property type="match status" value="1"/>
</dbReference>
<evidence type="ECO:0000255" key="1">
    <source>
        <dbReference type="HAMAP-Rule" id="MF_00392"/>
    </source>
</evidence>
<reference key="1">
    <citation type="journal article" date="2009" name="J. Bacteriol.">
        <title>Complete and draft genome sequences of six members of the Aquificales.</title>
        <authorList>
            <person name="Reysenbach A.-L."/>
            <person name="Hamamura N."/>
            <person name="Podar M."/>
            <person name="Griffiths E."/>
            <person name="Ferreira S."/>
            <person name="Hochstein R."/>
            <person name="Heidelberg J."/>
            <person name="Johnson J."/>
            <person name="Mead D."/>
            <person name="Pohorille A."/>
            <person name="Sarmiento M."/>
            <person name="Schweighofer K."/>
            <person name="Seshadri R."/>
            <person name="Voytek M.A."/>
        </authorList>
    </citation>
    <scope>NUCLEOTIDE SEQUENCE [LARGE SCALE GENOMIC DNA]</scope>
    <source>
        <strain>YO3AOP1</strain>
    </source>
</reference>
<feature type="chain" id="PRO_1000123067" description="Lipid-A-disaccharide synthase">
    <location>
        <begin position="1"/>
        <end position="388"/>
    </location>
</feature>
<protein>
    <recommendedName>
        <fullName evidence="1">Lipid-A-disaccharide synthase</fullName>
        <ecNumber evidence="1">2.4.1.182</ecNumber>
    </recommendedName>
</protein>